<protein>
    <recommendedName>
        <fullName evidence="1">UDP-N-acetylglucosamine--N-acetylmuramyl-(pentapeptide) pyrophosphoryl-undecaprenol N-acetylglucosamine transferase</fullName>
        <ecNumber evidence="1">2.4.1.227</ecNumber>
    </recommendedName>
    <alternativeName>
        <fullName evidence="1">Undecaprenyl-PP-MurNAc-pentapeptide-UDPGlcNAc GlcNAc transferase</fullName>
    </alternativeName>
</protein>
<organism>
    <name type="scientific">Geobacillus kaustophilus (strain HTA426)</name>
    <dbReference type="NCBI Taxonomy" id="235909"/>
    <lineage>
        <taxon>Bacteria</taxon>
        <taxon>Bacillati</taxon>
        <taxon>Bacillota</taxon>
        <taxon>Bacilli</taxon>
        <taxon>Bacillales</taxon>
        <taxon>Anoxybacillaceae</taxon>
        <taxon>Geobacillus</taxon>
        <taxon>Geobacillus thermoleovorans group</taxon>
    </lineage>
</organism>
<proteinExistence type="inferred from homology"/>
<gene>
    <name evidence="1" type="primary">murG</name>
    <name type="ordered locus">GK0219</name>
</gene>
<keyword id="KW-0131">Cell cycle</keyword>
<keyword id="KW-0132">Cell division</keyword>
<keyword id="KW-1003">Cell membrane</keyword>
<keyword id="KW-0133">Cell shape</keyword>
<keyword id="KW-0961">Cell wall biogenesis/degradation</keyword>
<keyword id="KW-0328">Glycosyltransferase</keyword>
<keyword id="KW-0472">Membrane</keyword>
<keyword id="KW-0573">Peptidoglycan synthesis</keyword>
<keyword id="KW-1185">Reference proteome</keyword>
<keyword id="KW-0808">Transferase</keyword>
<comment type="function">
    <text evidence="1">Cell wall formation. Catalyzes the transfer of a GlcNAc subunit on undecaprenyl-pyrophosphoryl-MurNAc-pentapeptide (lipid intermediate I) to form undecaprenyl-pyrophosphoryl-MurNAc-(pentapeptide)GlcNAc (lipid intermediate II).</text>
</comment>
<comment type="catalytic activity">
    <reaction evidence="1">
        <text>di-trans,octa-cis-undecaprenyl diphospho-N-acetyl-alpha-D-muramoyl-L-alanyl-D-glutamyl-meso-2,6-diaminopimeloyl-D-alanyl-D-alanine + UDP-N-acetyl-alpha-D-glucosamine = di-trans,octa-cis-undecaprenyl diphospho-[N-acetyl-alpha-D-glucosaminyl-(1-&gt;4)]-N-acetyl-alpha-D-muramoyl-L-alanyl-D-glutamyl-meso-2,6-diaminopimeloyl-D-alanyl-D-alanine + UDP + H(+)</text>
        <dbReference type="Rhea" id="RHEA:31227"/>
        <dbReference type="ChEBI" id="CHEBI:15378"/>
        <dbReference type="ChEBI" id="CHEBI:57705"/>
        <dbReference type="ChEBI" id="CHEBI:58223"/>
        <dbReference type="ChEBI" id="CHEBI:61387"/>
        <dbReference type="ChEBI" id="CHEBI:61388"/>
        <dbReference type="EC" id="2.4.1.227"/>
    </reaction>
</comment>
<comment type="pathway">
    <text evidence="1">Cell wall biogenesis; peptidoglycan biosynthesis.</text>
</comment>
<comment type="subcellular location">
    <subcellularLocation>
        <location evidence="1">Cell membrane</location>
        <topology evidence="1">Peripheral membrane protein</topology>
        <orientation evidence="1">Cytoplasmic side</orientation>
    </subcellularLocation>
</comment>
<comment type="similarity">
    <text evidence="1">Belongs to the glycosyltransferase 28 family. MurG subfamily.</text>
</comment>
<evidence type="ECO:0000255" key="1">
    <source>
        <dbReference type="HAMAP-Rule" id="MF_00033"/>
    </source>
</evidence>
<sequence length="357" mass="39358">MRKKIILTGGGTAGHVMVNVALIPKLKELGWDIVYIGSHQGIEREIIGRIDGVPYYSVSTGKLRRYFDWKNFKDPFNVLKGVWQAYRLIQKEKPDVVFSKGGFVSVPVILGAWLNGVPSVIHESDLTPGLANKIAMPFATKICLTFPETKQYVNADKAVYVGAVVRDELKDGNAEQGRKMCQFDGKKPVLLAMGGSLGSKKINDALRANLSTLLAEFDIIHICGKGNIDPSLAGQKGYKQFEYVNEELPHLLALADIVVSRAGANAIFELLSLRKPMLLIPLSKAASRGDQIANARSFEKAGYAEVLMEEDLTNESLQAAIHRLYENKDRYQKNMEKAGASDPLQTLLAIIQDTARL</sequence>
<reference key="1">
    <citation type="journal article" date="2004" name="Nucleic Acids Res.">
        <title>Thermoadaptation trait revealed by the genome sequence of thermophilic Geobacillus kaustophilus.</title>
        <authorList>
            <person name="Takami H."/>
            <person name="Takaki Y."/>
            <person name="Chee G.-J."/>
            <person name="Nishi S."/>
            <person name="Shimamura S."/>
            <person name="Suzuki H."/>
            <person name="Matsui S."/>
            <person name="Uchiyama I."/>
        </authorList>
    </citation>
    <scope>NUCLEOTIDE SEQUENCE [LARGE SCALE GENOMIC DNA]</scope>
    <source>
        <strain>HTA426</strain>
    </source>
</reference>
<name>MURG_GEOKA</name>
<feature type="chain" id="PRO_0000225055" description="UDP-N-acetylglucosamine--N-acetylmuramyl-(pentapeptide) pyrophosphoryl-undecaprenol N-acetylglucosamine transferase">
    <location>
        <begin position="1"/>
        <end position="357"/>
    </location>
</feature>
<feature type="binding site" evidence="1">
    <location>
        <begin position="12"/>
        <end position="14"/>
    </location>
    <ligand>
        <name>UDP-N-acetyl-alpha-D-glucosamine</name>
        <dbReference type="ChEBI" id="CHEBI:57705"/>
    </ligand>
</feature>
<feature type="binding site" evidence="1">
    <location>
        <position position="166"/>
    </location>
    <ligand>
        <name>UDP-N-acetyl-alpha-D-glucosamine</name>
        <dbReference type="ChEBI" id="CHEBI:57705"/>
    </ligand>
</feature>
<feature type="binding site" evidence="1">
    <location>
        <position position="196"/>
    </location>
    <ligand>
        <name>UDP-N-acetyl-alpha-D-glucosamine</name>
        <dbReference type="ChEBI" id="CHEBI:57705"/>
    </ligand>
</feature>
<feature type="binding site" evidence="1">
    <location>
        <position position="291"/>
    </location>
    <ligand>
        <name>UDP-N-acetyl-alpha-D-glucosamine</name>
        <dbReference type="ChEBI" id="CHEBI:57705"/>
    </ligand>
</feature>
<accession>Q5L3H6</accession>
<dbReference type="EC" id="2.4.1.227" evidence="1"/>
<dbReference type="EMBL" id="BA000043">
    <property type="protein sequence ID" value="BAD74504.1"/>
    <property type="molecule type" value="Genomic_DNA"/>
</dbReference>
<dbReference type="RefSeq" id="WP_011229729.1">
    <property type="nucleotide sequence ID" value="NC_006510.1"/>
</dbReference>
<dbReference type="SMR" id="Q5L3H6"/>
<dbReference type="STRING" id="235909.GK0219"/>
<dbReference type="CAZy" id="GT28">
    <property type="family name" value="Glycosyltransferase Family 28"/>
</dbReference>
<dbReference type="KEGG" id="gka:GK0219"/>
<dbReference type="PATRIC" id="fig|235909.7.peg.279"/>
<dbReference type="eggNOG" id="COG0707">
    <property type="taxonomic scope" value="Bacteria"/>
</dbReference>
<dbReference type="HOGENOM" id="CLU_037404_0_0_9"/>
<dbReference type="UniPathway" id="UPA00219"/>
<dbReference type="Proteomes" id="UP000001172">
    <property type="component" value="Chromosome"/>
</dbReference>
<dbReference type="GO" id="GO:0005886">
    <property type="term" value="C:plasma membrane"/>
    <property type="evidence" value="ECO:0007669"/>
    <property type="project" value="UniProtKB-SubCell"/>
</dbReference>
<dbReference type="GO" id="GO:0051991">
    <property type="term" value="F:UDP-N-acetyl-D-glucosamine:N-acetylmuramoyl-L-alanyl-D-glutamyl-meso-2,6-diaminopimelyl-D-alanyl-D-alanine-diphosphoundecaprenol 4-beta-N-acetylglucosaminlytransferase activity"/>
    <property type="evidence" value="ECO:0007669"/>
    <property type="project" value="RHEA"/>
</dbReference>
<dbReference type="GO" id="GO:0050511">
    <property type="term" value="F:undecaprenyldiphospho-muramoylpentapeptide beta-N-acetylglucosaminyltransferase activity"/>
    <property type="evidence" value="ECO:0007669"/>
    <property type="project" value="UniProtKB-UniRule"/>
</dbReference>
<dbReference type="GO" id="GO:0005975">
    <property type="term" value="P:carbohydrate metabolic process"/>
    <property type="evidence" value="ECO:0007669"/>
    <property type="project" value="InterPro"/>
</dbReference>
<dbReference type="GO" id="GO:0051301">
    <property type="term" value="P:cell division"/>
    <property type="evidence" value="ECO:0007669"/>
    <property type="project" value="UniProtKB-KW"/>
</dbReference>
<dbReference type="GO" id="GO:0071555">
    <property type="term" value="P:cell wall organization"/>
    <property type="evidence" value="ECO:0007669"/>
    <property type="project" value="UniProtKB-KW"/>
</dbReference>
<dbReference type="GO" id="GO:0030259">
    <property type="term" value="P:lipid glycosylation"/>
    <property type="evidence" value="ECO:0007669"/>
    <property type="project" value="UniProtKB-UniRule"/>
</dbReference>
<dbReference type="GO" id="GO:0009252">
    <property type="term" value="P:peptidoglycan biosynthetic process"/>
    <property type="evidence" value="ECO:0007669"/>
    <property type="project" value="UniProtKB-UniRule"/>
</dbReference>
<dbReference type="GO" id="GO:0008360">
    <property type="term" value="P:regulation of cell shape"/>
    <property type="evidence" value="ECO:0007669"/>
    <property type="project" value="UniProtKB-KW"/>
</dbReference>
<dbReference type="CDD" id="cd03785">
    <property type="entry name" value="GT28_MurG"/>
    <property type="match status" value="1"/>
</dbReference>
<dbReference type="Gene3D" id="3.40.50.2000">
    <property type="entry name" value="Glycogen Phosphorylase B"/>
    <property type="match status" value="2"/>
</dbReference>
<dbReference type="HAMAP" id="MF_00033">
    <property type="entry name" value="MurG"/>
    <property type="match status" value="1"/>
</dbReference>
<dbReference type="InterPro" id="IPR006009">
    <property type="entry name" value="GlcNAc_MurG"/>
</dbReference>
<dbReference type="InterPro" id="IPR007235">
    <property type="entry name" value="Glyco_trans_28_C"/>
</dbReference>
<dbReference type="InterPro" id="IPR004276">
    <property type="entry name" value="GlycoTrans_28_N"/>
</dbReference>
<dbReference type="NCBIfam" id="TIGR01133">
    <property type="entry name" value="murG"/>
    <property type="match status" value="1"/>
</dbReference>
<dbReference type="NCBIfam" id="NF009102">
    <property type="entry name" value="PRK12446.1"/>
    <property type="match status" value="1"/>
</dbReference>
<dbReference type="PANTHER" id="PTHR21015:SF27">
    <property type="entry name" value="UDP-N-ACETYLGLUCOSAMINE--N-ACETYLMURAMYL-(PENTAPEPTIDE) PYROPHOSPHORYL-UNDECAPRENOL N-ACETYLGLUCOSAMINE TRANSFERASE"/>
    <property type="match status" value="1"/>
</dbReference>
<dbReference type="PANTHER" id="PTHR21015">
    <property type="entry name" value="UDP-N-ACETYLGLUCOSAMINE--N-ACETYLMURAMYL-(PENTAPEPTIDE) PYROPHOSPHORYL-UNDECAPRENOL N-ACETYLGLUCOSAMINE TRANSFERASE 1"/>
    <property type="match status" value="1"/>
</dbReference>
<dbReference type="Pfam" id="PF04101">
    <property type="entry name" value="Glyco_tran_28_C"/>
    <property type="match status" value="1"/>
</dbReference>
<dbReference type="Pfam" id="PF03033">
    <property type="entry name" value="Glyco_transf_28"/>
    <property type="match status" value="1"/>
</dbReference>
<dbReference type="SUPFAM" id="SSF53756">
    <property type="entry name" value="UDP-Glycosyltransferase/glycogen phosphorylase"/>
    <property type="match status" value="1"/>
</dbReference>